<accession>P09508</accession>
<reference key="1">
    <citation type="journal article" date="1988" name="Nucleic Acids Res.">
        <title>Nucleotide sequence of beet western yellows virus RNA.</title>
        <authorList>
            <person name="Veidt I."/>
            <person name="Lot H."/>
            <person name="Leiser M."/>
            <person name="Scheidecker D."/>
            <person name="Guilley H."/>
            <person name="Richards K.E."/>
            <person name="Jonard G."/>
        </authorList>
    </citation>
    <scope>NUCLEOTIDE SEQUENCE [GENOMIC RNA]</scope>
</reference>
<gene>
    <name type="ORF">ORF3</name>
</gene>
<feature type="chain" id="PRO_0000222403" description="Major capsid protein">
    <location>
        <begin position="1"/>
        <end position="202"/>
    </location>
</feature>
<feature type="region of interest" description="Disordered" evidence="3">
    <location>
        <begin position="1"/>
        <end position="64"/>
    </location>
</feature>
<feature type="compositionally biased region" description="Basic residues" evidence="3">
    <location>
        <begin position="10"/>
        <end position="24"/>
    </location>
</feature>
<feature type="compositionally biased region" description="Low complexity" evidence="3">
    <location>
        <begin position="25"/>
        <end position="36"/>
    </location>
</feature>
<feature type="compositionally biased region" description="Basic residues" evidence="3">
    <location>
        <begin position="38"/>
        <end position="49"/>
    </location>
</feature>
<feature type="compositionally biased region" description="Low complexity" evidence="3">
    <location>
        <begin position="50"/>
        <end position="60"/>
    </location>
</feature>
<feature type="strand" evidence="5">
    <location>
        <begin position="65"/>
        <end position="72"/>
    </location>
</feature>
<feature type="strand" evidence="5">
    <location>
        <begin position="75"/>
        <end position="86"/>
    </location>
</feature>
<feature type="helix" evidence="5">
    <location>
        <begin position="92"/>
        <end position="99"/>
    </location>
</feature>
<feature type="strand" evidence="5">
    <location>
        <begin position="102"/>
        <end position="116"/>
    </location>
</feature>
<feature type="strand" evidence="5">
    <location>
        <begin position="125"/>
        <end position="134"/>
    </location>
</feature>
<feature type="strand" evidence="5">
    <location>
        <begin position="144"/>
        <end position="147"/>
    </location>
</feature>
<feature type="strand" evidence="5">
    <location>
        <begin position="152"/>
        <end position="156"/>
    </location>
</feature>
<feature type="helix" evidence="5">
    <location>
        <begin position="158"/>
        <end position="161"/>
    </location>
</feature>
<feature type="strand" evidence="5">
    <location>
        <begin position="167"/>
        <end position="171"/>
    </location>
</feature>
<feature type="strand" evidence="5">
    <location>
        <begin position="174"/>
        <end position="182"/>
    </location>
</feature>
<feature type="strand" evidence="5">
    <location>
        <begin position="184"/>
        <end position="186"/>
    </location>
</feature>
<feature type="strand" evidence="5">
    <location>
        <begin position="188"/>
        <end position="201"/>
    </location>
</feature>
<name>CAPSD_TYYVF</name>
<proteinExistence type="evidence at protein level"/>
<keyword id="KW-0002">3D-structure</keyword>
<keyword id="KW-0167">Capsid protein</keyword>
<keyword id="KW-1185">Reference proteome</keyword>
<keyword id="KW-1142">T=3 icosahedral capsid protein</keyword>
<keyword id="KW-0946">Virion</keyword>
<evidence type="ECO:0000250" key="1">
    <source>
        <dbReference type="UniProtKB" id="P17522"/>
    </source>
</evidence>
<evidence type="ECO:0000250" key="2">
    <source>
        <dbReference type="UniProtKB" id="P17525"/>
    </source>
</evidence>
<evidence type="ECO:0000256" key="3">
    <source>
        <dbReference type="SAM" id="MobiDB-lite"/>
    </source>
</evidence>
<evidence type="ECO:0000305" key="4"/>
<evidence type="ECO:0007829" key="5">
    <source>
        <dbReference type="PDB" id="6RTK"/>
    </source>
</evidence>
<dbReference type="EMBL" id="X13063">
    <property type="protein sequence ID" value="CAA31465.1"/>
    <property type="molecule type" value="Genomic_RNA"/>
</dbReference>
<dbReference type="PIR" id="S01941">
    <property type="entry name" value="VCVQFL"/>
</dbReference>
<dbReference type="RefSeq" id="NP_620488.1">
    <property type="nucleotide sequence ID" value="NC_003743.1"/>
</dbReference>
<dbReference type="PDB" id="6RTK">
    <property type="method" value="EM"/>
    <property type="resolution" value="3.47 A"/>
    <property type="chains" value="A/B/C=1-202"/>
</dbReference>
<dbReference type="PDBsum" id="6RTK"/>
<dbReference type="EMDB" id="EMD-10001"/>
<dbReference type="EMDB" id="EMD-10003"/>
<dbReference type="SMR" id="P09508"/>
<dbReference type="KEGG" id="vg:940484"/>
<dbReference type="Proteomes" id="UP000007545">
    <property type="component" value="Segment"/>
</dbReference>
<dbReference type="GO" id="GO:0039617">
    <property type="term" value="C:T=3 icosahedral viral capsid"/>
    <property type="evidence" value="ECO:0007669"/>
    <property type="project" value="UniProtKB-KW"/>
</dbReference>
<dbReference type="GO" id="GO:0005198">
    <property type="term" value="F:structural molecule activity"/>
    <property type="evidence" value="ECO:0007669"/>
    <property type="project" value="InterPro"/>
</dbReference>
<dbReference type="InterPro" id="IPR001517">
    <property type="entry name" value="Luteo_coat"/>
</dbReference>
<dbReference type="Pfam" id="PF00894">
    <property type="entry name" value="Luteo_coat"/>
    <property type="match status" value="1"/>
</dbReference>
<dbReference type="PRINTS" id="PR00915">
    <property type="entry name" value="LUTEOGP1COAT"/>
</dbReference>
<sequence>MNTVVGRRIINGRRRPRRQTRRAQRPQPVVVVQTSRATQRRPRRRRRGNNRTGRTVPTRGAGSSETFVFSKDNLAGSSSGAITFGPSLSDCPAFSNGMLKAYHEYKISMVILEFVSEASSQNSGSIAYELDPHCKLNSLSSTINKFGITKPGKRAFTASYINGTEWHDVAEDQFRILYKGNGSSSIAGSFRITIKCQFHNPK</sequence>
<comment type="function">
    <text evidence="1">Major capsid protein that self-assembles to form an icosahedral capsid with a T=3 symmetry, about 23 nm in diameter, and consisting of 180 capsid proteins monomers. Most of the 180 monomers are the major capsid protein, but a small percentage contain the minor capsid protein, which has a long C-terminal extension.</text>
</comment>
<comment type="subcellular location">
    <subcellularLocation>
        <location evidence="1">Virion</location>
    </subcellularLocation>
</comment>
<comment type="domain">
    <text evidence="2">The N-terminus like those of many plant virus capsid proteins is highly basic. These regions may be involved in protein-RNA interaction.</text>
</comment>
<comment type="similarity">
    <text evidence="4">Belongs to the luteoviruses capsid protein family.</text>
</comment>
<protein>
    <recommendedName>
        <fullName>Major capsid protein</fullName>
    </recommendedName>
    <alternativeName>
        <fullName>Coat protein</fullName>
        <shortName>CP</shortName>
    </alternativeName>
</protein>
<organism>
    <name type="scientific">Turnip yellows virus (isolate FL-1)</name>
    <name type="common">TuYV</name>
    <name type="synonym">BWYV-FL1</name>
    <dbReference type="NCBI Taxonomy" id="12043"/>
    <lineage>
        <taxon>Viruses</taxon>
        <taxon>Riboviria</taxon>
        <taxon>Orthornavirae</taxon>
        <taxon>Pisuviricota</taxon>
        <taxon>Pisoniviricetes</taxon>
        <taxon>Sobelivirales</taxon>
        <taxon>Solemoviridae</taxon>
        <taxon>Polerovirus</taxon>
        <taxon>Beet western yellows virus</taxon>
    </lineage>
</organism>
<organismHost>
    <name type="scientific">Beta vulgaris</name>
    <name type="common">Sugar beet</name>
    <dbReference type="NCBI Taxonomy" id="161934"/>
</organismHost>
<organismHost>
    <name type="scientific">Brassica napus subsp. rapifera</name>
    <dbReference type="NCBI Taxonomy" id="3709"/>
</organismHost>
<organismHost>
    <name type="scientific">Brassica napus var. napus</name>
    <dbReference type="NCBI Taxonomy" id="138011"/>
</organismHost>
<organismHost>
    <name type="scientific">Brassica nigra</name>
    <name type="common">Black mustard</name>
    <name type="synonym">Sinapis nigra</name>
    <dbReference type="NCBI Taxonomy" id="3710"/>
</organismHost>
<organismHost>
    <name type="scientific">Brassica oleracea var. botrytis</name>
    <name type="common">Cauliflower</name>
    <dbReference type="NCBI Taxonomy" id="3715"/>
</organismHost>
<organismHost>
    <name type="scientific">Brassica oleracea var. capitata</name>
    <name type="common">Cabbage</name>
    <dbReference type="NCBI Taxonomy" id="3716"/>
</organismHost>
<organismHost>
    <name type="scientific">Brassica rapa subsp. rapa</name>
    <name type="common">Turnip</name>
    <dbReference type="NCBI Taxonomy" id="51350"/>
</organismHost>
<organismHost>
    <name type="scientific">Capsicum annuum</name>
    <name type="common">Capsicum pepper</name>
    <dbReference type="NCBI Taxonomy" id="4072"/>
</organismHost>
<organismHost>
    <name type="scientific">Cicer arietinum</name>
    <name type="common">Chickpea</name>
    <name type="synonym">Garbanzo</name>
    <dbReference type="NCBI Taxonomy" id="3827"/>
</organismHost>
<organismHost>
    <name type="scientific">Citrullus lanatus</name>
    <name type="common">Watermelon</name>
    <name type="synonym">Citrullus vulgaris</name>
    <dbReference type="NCBI Taxonomy" id="3654"/>
</organismHost>
<organismHost>
    <name type="scientific">Crambe hispanica subsp. abyssinica</name>
    <name type="common">Abyssinian kale</name>
    <name type="synonym">Crambe abyssinica</name>
    <dbReference type="NCBI Taxonomy" id="3721"/>
</organismHost>
<organismHost>
    <name type="scientific">Cucumis sativus</name>
    <name type="common">Cucumber</name>
    <dbReference type="NCBI Taxonomy" id="3659"/>
</organismHost>
<organismHost>
    <name type="scientific">Cucurbita pepo</name>
    <name type="common">Vegetable marrow</name>
    <name type="synonym">Summer squash</name>
    <dbReference type="NCBI Taxonomy" id="3663"/>
</organismHost>
<organismHost>
    <name type="scientific">Glycine max</name>
    <name type="common">Soybean</name>
    <name type="synonym">Glycine hispida</name>
    <dbReference type="NCBI Taxonomy" id="3847"/>
</organismHost>
<organismHost>
    <name type="scientific">Helianthus annuus</name>
    <name type="common">Common sunflower</name>
    <dbReference type="NCBI Taxonomy" id="4232"/>
</organismHost>
<organismHost>
    <name type="scientific">Lactuca sativa</name>
    <name type="common">Garden lettuce</name>
    <dbReference type="NCBI Taxonomy" id="4236"/>
</organismHost>
<organismHost>
    <name type="scientific">Phlox drummondii</name>
    <name type="common">Annual phlox</name>
    <dbReference type="NCBI Taxonomy" id="103529"/>
</organismHost>
<organismHost>
    <name type="scientific">Pisum sativum</name>
    <name type="common">Garden pea</name>
    <name type="synonym">Lathyrus oleraceus</name>
    <dbReference type="NCBI Taxonomy" id="3888"/>
</organismHost>
<organismHost>
    <name type="scientific">Raphanus sativus</name>
    <name type="common">Radish</name>
    <name type="synonym">Raphanus raphanistrum var. sativus</name>
    <dbReference type="NCBI Taxonomy" id="3726"/>
</organismHost>
<organismHost>
    <name type="scientific">Solanum lycopersicum</name>
    <name type="common">Tomato</name>
    <name type="synonym">Lycopersicon esculentum</name>
    <dbReference type="NCBI Taxonomy" id="4081"/>
</organismHost>
<organismHost>
    <name type="scientific">Spinacia oleracea</name>
    <name type="common">Spinach</name>
    <dbReference type="NCBI Taxonomy" id="3562"/>
</organismHost>
<organismHost>
    <name type="scientific">Trifolium subterraneum</name>
    <name type="common">Subterranean clover</name>
    <dbReference type="NCBI Taxonomy" id="3900"/>
</organismHost>
<organismHost>
    <name type="scientific">Vicia faba</name>
    <name type="common">Broad bean</name>
    <name type="synonym">Faba vulgaris</name>
    <dbReference type="NCBI Taxonomy" id="3906"/>
</organismHost>